<evidence type="ECO:0000255" key="1"/>
<evidence type="ECO:0000305" key="2"/>
<proteinExistence type="predicted"/>
<sequence>MPGVIFWTIFIIQFMIWVFLSTTKIGRVIAFIWGTMPFLALYLKYTGYFPTIFENPDVNLFANLLSNFVVEWSYLVVQTTVPSWIGLLFGLKLSGNNDTPQII</sequence>
<dbReference type="EMBL" id="L77117">
    <property type="protein sequence ID" value="AAB98119.1"/>
    <property type="molecule type" value="Genomic_DNA"/>
</dbReference>
<dbReference type="PIR" id="C64316">
    <property type="entry name" value="C64316"/>
</dbReference>
<dbReference type="RefSeq" id="WP_010869624.1">
    <property type="nucleotide sequence ID" value="NC_000909.1"/>
</dbReference>
<dbReference type="STRING" id="243232.MJ_0131"/>
<dbReference type="PaxDb" id="243232-MJ_0131"/>
<dbReference type="EnsemblBacteria" id="AAB98119">
    <property type="protein sequence ID" value="AAB98119"/>
    <property type="gene ID" value="MJ_0131"/>
</dbReference>
<dbReference type="GeneID" id="1450972"/>
<dbReference type="KEGG" id="mja:MJ_0131"/>
<dbReference type="eggNOG" id="arCOG06571">
    <property type="taxonomic scope" value="Archaea"/>
</dbReference>
<dbReference type="HOGENOM" id="CLU_2257380_0_0_2"/>
<dbReference type="InParanoid" id="Q57595"/>
<dbReference type="Proteomes" id="UP000000805">
    <property type="component" value="Chromosome"/>
</dbReference>
<dbReference type="GO" id="GO:0005886">
    <property type="term" value="C:plasma membrane"/>
    <property type="evidence" value="ECO:0007669"/>
    <property type="project" value="UniProtKB-SubCell"/>
</dbReference>
<reference key="1">
    <citation type="journal article" date="1996" name="Science">
        <title>Complete genome sequence of the methanogenic archaeon, Methanococcus jannaschii.</title>
        <authorList>
            <person name="Bult C.J."/>
            <person name="White O."/>
            <person name="Olsen G.J."/>
            <person name="Zhou L."/>
            <person name="Fleischmann R.D."/>
            <person name="Sutton G.G."/>
            <person name="Blake J.A."/>
            <person name="FitzGerald L.M."/>
            <person name="Clayton R.A."/>
            <person name="Gocayne J.D."/>
            <person name="Kerlavage A.R."/>
            <person name="Dougherty B.A."/>
            <person name="Tomb J.-F."/>
            <person name="Adams M.D."/>
            <person name="Reich C.I."/>
            <person name="Overbeek R."/>
            <person name="Kirkness E.F."/>
            <person name="Weinstock K.G."/>
            <person name="Merrick J.M."/>
            <person name="Glodek A."/>
            <person name="Scott J.L."/>
            <person name="Geoghagen N.S.M."/>
            <person name="Weidman J.F."/>
            <person name="Fuhrmann J.L."/>
            <person name="Nguyen D."/>
            <person name="Utterback T.R."/>
            <person name="Kelley J.M."/>
            <person name="Peterson J.D."/>
            <person name="Sadow P.W."/>
            <person name="Hanna M.C."/>
            <person name="Cotton M.D."/>
            <person name="Roberts K.M."/>
            <person name="Hurst M.A."/>
            <person name="Kaine B.P."/>
            <person name="Borodovsky M."/>
            <person name="Klenk H.-P."/>
            <person name="Fraser C.M."/>
            <person name="Smith H.O."/>
            <person name="Woese C.R."/>
            <person name="Venter J.C."/>
        </authorList>
    </citation>
    <scope>NUCLEOTIDE SEQUENCE [LARGE SCALE GENOMIC DNA]</scope>
    <source>
        <strain>ATCC 43067 / DSM 2661 / JAL-1 / JCM 10045 / NBRC 100440</strain>
    </source>
</reference>
<gene>
    <name type="ordered locus">MJ0131</name>
</gene>
<organism>
    <name type="scientific">Methanocaldococcus jannaschii (strain ATCC 43067 / DSM 2661 / JAL-1 / JCM 10045 / NBRC 100440)</name>
    <name type="common">Methanococcus jannaschii</name>
    <dbReference type="NCBI Taxonomy" id="243232"/>
    <lineage>
        <taxon>Archaea</taxon>
        <taxon>Methanobacteriati</taxon>
        <taxon>Methanobacteriota</taxon>
        <taxon>Methanomada group</taxon>
        <taxon>Methanococci</taxon>
        <taxon>Methanococcales</taxon>
        <taxon>Methanocaldococcaceae</taxon>
        <taxon>Methanocaldococcus</taxon>
    </lineage>
</organism>
<comment type="subcellular location">
    <subcellularLocation>
        <location evidence="2">Cell membrane</location>
        <topology evidence="2">Multi-pass membrane protein</topology>
    </subcellularLocation>
</comment>
<name>Y131_METJA</name>
<accession>Q57595</accession>
<keyword id="KW-1003">Cell membrane</keyword>
<keyword id="KW-0472">Membrane</keyword>
<keyword id="KW-1185">Reference proteome</keyword>
<keyword id="KW-0812">Transmembrane</keyword>
<keyword id="KW-1133">Transmembrane helix</keyword>
<feature type="chain" id="PRO_0000106709" description="Uncharacterized protein MJ0131">
    <location>
        <begin position="1"/>
        <end position="103"/>
    </location>
</feature>
<feature type="transmembrane region" description="Helical" evidence="1">
    <location>
        <begin position="1"/>
        <end position="21"/>
    </location>
</feature>
<feature type="transmembrane region" description="Helical" evidence="1">
    <location>
        <begin position="29"/>
        <end position="49"/>
    </location>
</feature>
<feature type="transmembrane region" description="Helical" evidence="1">
    <location>
        <begin position="69"/>
        <end position="89"/>
    </location>
</feature>
<protein>
    <recommendedName>
        <fullName>Uncharacterized protein MJ0131</fullName>
    </recommendedName>
</protein>